<gene>
    <name evidence="1" type="primary">acsA</name>
    <name type="ordered locus">Sde_1067</name>
</gene>
<reference key="1">
    <citation type="journal article" date="2008" name="PLoS Genet.">
        <title>Complete genome sequence of the complex carbohydrate-degrading marine bacterium, Saccharophagus degradans strain 2-40 T.</title>
        <authorList>
            <person name="Weiner R.M."/>
            <person name="Taylor L.E. II"/>
            <person name="Henrissat B."/>
            <person name="Hauser L."/>
            <person name="Land M."/>
            <person name="Coutinho P.M."/>
            <person name="Rancurel C."/>
            <person name="Saunders E.H."/>
            <person name="Longmire A.G."/>
            <person name="Zhang H."/>
            <person name="Bayer E.A."/>
            <person name="Gilbert H.J."/>
            <person name="Larimer F."/>
            <person name="Zhulin I.B."/>
            <person name="Ekborg N.A."/>
            <person name="Lamed R."/>
            <person name="Richardson P.M."/>
            <person name="Borovok I."/>
            <person name="Hutcheson S."/>
        </authorList>
    </citation>
    <scope>NUCLEOTIDE SEQUENCE [LARGE SCALE GENOMIC DNA]</scope>
    <source>
        <strain>2-40 / ATCC 43961 / DSM 17024</strain>
    </source>
</reference>
<feature type="chain" id="PRO_1000065313" description="Acetyl-coenzyme A synthetase">
    <location>
        <begin position="1"/>
        <end position="645"/>
    </location>
</feature>
<feature type="binding site" evidence="1">
    <location>
        <begin position="190"/>
        <end position="193"/>
    </location>
    <ligand>
        <name>CoA</name>
        <dbReference type="ChEBI" id="CHEBI:57287"/>
    </ligand>
</feature>
<feature type="binding site" evidence="1">
    <location>
        <position position="308"/>
    </location>
    <ligand>
        <name>CoA</name>
        <dbReference type="ChEBI" id="CHEBI:57287"/>
    </ligand>
</feature>
<feature type="binding site" evidence="1">
    <location>
        <begin position="384"/>
        <end position="386"/>
    </location>
    <ligand>
        <name>ATP</name>
        <dbReference type="ChEBI" id="CHEBI:30616"/>
    </ligand>
</feature>
<feature type="binding site" evidence="1">
    <location>
        <begin position="408"/>
        <end position="413"/>
    </location>
    <ligand>
        <name>ATP</name>
        <dbReference type="ChEBI" id="CHEBI:30616"/>
    </ligand>
</feature>
<feature type="binding site" evidence="1">
    <location>
        <position position="497"/>
    </location>
    <ligand>
        <name>ATP</name>
        <dbReference type="ChEBI" id="CHEBI:30616"/>
    </ligand>
</feature>
<feature type="binding site" evidence="1">
    <location>
        <position position="512"/>
    </location>
    <ligand>
        <name>ATP</name>
        <dbReference type="ChEBI" id="CHEBI:30616"/>
    </ligand>
</feature>
<feature type="binding site" evidence="1">
    <location>
        <position position="520"/>
    </location>
    <ligand>
        <name>CoA</name>
        <dbReference type="ChEBI" id="CHEBI:57287"/>
    </ligand>
</feature>
<feature type="binding site" evidence="1">
    <location>
        <position position="523"/>
    </location>
    <ligand>
        <name>ATP</name>
        <dbReference type="ChEBI" id="CHEBI:30616"/>
    </ligand>
</feature>
<feature type="binding site" evidence="1">
    <location>
        <position position="534"/>
    </location>
    <ligand>
        <name>Mg(2+)</name>
        <dbReference type="ChEBI" id="CHEBI:18420"/>
    </ligand>
</feature>
<feature type="binding site" evidence="1">
    <location>
        <position position="536"/>
    </location>
    <ligand>
        <name>Mg(2+)</name>
        <dbReference type="ChEBI" id="CHEBI:18420"/>
    </ligand>
</feature>
<feature type="binding site" evidence="1">
    <location>
        <position position="539"/>
    </location>
    <ligand>
        <name>Mg(2+)</name>
        <dbReference type="ChEBI" id="CHEBI:18420"/>
    </ligand>
</feature>
<feature type="modified residue" description="N6-acetyllysine" evidence="1">
    <location>
        <position position="606"/>
    </location>
</feature>
<dbReference type="EC" id="6.2.1.1" evidence="1"/>
<dbReference type="EMBL" id="CP000282">
    <property type="protein sequence ID" value="ABD80329.1"/>
    <property type="molecule type" value="Genomic_DNA"/>
</dbReference>
<dbReference type="RefSeq" id="WP_011467549.1">
    <property type="nucleotide sequence ID" value="NC_007912.1"/>
</dbReference>
<dbReference type="SMR" id="Q21LV0"/>
<dbReference type="STRING" id="203122.Sde_1067"/>
<dbReference type="GeneID" id="98612747"/>
<dbReference type="KEGG" id="sde:Sde_1067"/>
<dbReference type="eggNOG" id="COG0365">
    <property type="taxonomic scope" value="Bacteria"/>
</dbReference>
<dbReference type="HOGENOM" id="CLU_000022_3_6_6"/>
<dbReference type="OrthoDB" id="9803968at2"/>
<dbReference type="Proteomes" id="UP000001947">
    <property type="component" value="Chromosome"/>
</dbReference>
<dbReference type="GO" id="GO:0005829">
    <property type="term" value="C:cytosol"/>
    <property type="evidence" value="ECO:0007669"/>
    <property type="project" value="TreeGrafter"/>
</dbReference>
<dbReference type="GO" id="GO:0003987">
    <property type="term" value="F:acetate-CoA ligase activity"/>
    <property type="evidence" value="ECO:0007669"/>
    <property type="project" value="UniProtKB-UniRule"/>
</dbReference>
<dbReference type="GO" id="GO:0016208">
    <property type="term" value="F:AMP binding"/>
    <property type="evidence" value="ECO:0007669"/>
    <property type="project" value="InterPro"/>
</dbReference>
<dbReference type="GO" id="GO:0005524">
    <property type="term" value="F:ATP binding"/>
    <property type="evidence" value="ECO:0007669"/>
    <property type="project" value="UniProtKB-KW"/>
</dbReference>
<dbReference type="GO" id="GO:0046872">
    <property type="term" value="F:metal ion binding"/>
    <property type="evidence" value="ECO:0007669"/>
    <property type="project" value="UniProtKB-KW"/>
</dbReference>
<dbReference type="GO" id="GO:0019427">
    <property type="term" value="P:acetyl-CoA biosynthetic process from acetate"/>
    <property type="evidence" value="ECO:0007669"/>
    <property type="project" value="InterPro"/>
</dbReference>
<dbReference type="CDD" id="cd05966">
    <property type="entry name" value="ACS"/>
    <property type="match status" value="1"/>
</dbReference>
<dbReference type="FunFam" id="3.30.300.30:FF:000004">
    <property type="entry name" value="Acetyl-coenzyme A synthetase"/>
    <property type="match status" value="1"/>
</dbReference>
<dbReference type="FunFam" id="3.40.50.12780:FF:000001">
    <property type="entry name" value="Acetyl-coenzyme A synthetase"/>
    <property type="match status" value="1"/>
</dbReference>
<dbReference type="Gene3D" id="3.30.300.30">
    <property type="match status" value="1"/>
</dbReference>
<dbReference type="Gene3D" id="3.40.50.12780">
    <property type="entry name" value="N-terminal domain of ligase-like"/>
    <property type="match status" value="1"/>
</dbReference>
<dbReference type="HAMAP" id="MF_01123">
    <property type="entry name" value="Ac_CoA_synth"/>
    <property type="match status" value="1"/>
</dbReference>
<dbReference type="InterPro" id="IPR011904">
    <property type="entry name" value="Ac_CoA_lig"/>
</dbReference>
<dbReference type="InterPro" id="IPR032387">
    <property type="entry name" value="ACAS_N"/>
</dbReference>
<dbReference type="InterPro" id="IPR025110">
    <property type="entry name" value="AMP-bd_C"/>
</dbReference>
<dbReference type="InterPro" id="IPR045851">
    <property type="entry name" value="AMP-bd_C_sf"/>
</dbReference>
<dbReference type="InterPro" id="IPR020845">
    <property type="entry name" value="AMP-binding_CS"/>
</dbReference>
<dbReference type="InterPro" id="IPR000873">
    <property type="entry name" value="AMP-dep_synth/lig_dom"/>
</dbReference>
<dbReference type="InterPro" id="IPR042099">
    <property type="entry name" value="ANL_N_sf"/>
</dbReference>
<dbReference type="NCBIfam" id="TIGR02188">
    <property type="entry name" value="Ac_CoA_lig_AcsA"/>
    <property type="match status" value="1"/>
</dbReference>
<dbReference type="NCBIfam" id="NF001208">
    <property type="entry name" value="PRK00174.1"/>
    <property type="match status" value="1"/>
</dbReference>
<dbReference type="PANTHER" id="PTHR24095">
    <property type="entry name" value="ACETYL-COENZYME A SYNTHETASE"/>
    <property type="match status" value="1"/>
</dbReference>
<dbReference type="PANTHER" id="PTHR24095:SF14">
    <property type="entry name" value="ACETYL-COENZYME A SYNTHETASE 1"/>
    <property type="match status" value="1"/>
</dbReference>
<dbReference type="Pfam" id="PF16177">
    <property type="entry name" value="ACAS_N"/>
    <property type="match status" value="1"/>
</dbReference>
<dbReference type="Pfam" id="PF00501">
    <property type="entry name" value="AMP-binding"/>
    <property type="match status" value="1"/>
</dbReference>
<dbReference type="Pfam" id="PF13193">
    <property type="entry name" value="AMP-binding_C"/>
    <property type="match status" value="1"/>
</dbReference>
<dbReference type="SUPFAM" id="SSF56801">
    <property type="entry name" value="Acetyl-CoA synthetase-like"/>
    <property type="match status" value="1"/>
</dbReference>
<dbReference type="PROSITE" id="PS00455">
    <property type="entry name" value="AMP_BINDING"/>
    <property type="match status" value="1"/>
</dbReference>
<organism>
    <name type="scientific">Saccharophagus degradans (strain 2-40 / ATCC 43961 / DSM 17024)</name>
    <dbReference type="NCBI Taxonomy" id="203122"/>
    <lineage>
        <taxon>Bacteria</taxon>
        <taxon>Pseudomonadati</taxon>
        <taxon>Pseudomonadota</taxon>
        <taxon>Gammaproteobacteria</taxon>
        <taxon>Cellvibrionales</taxon>
        <taxon>Cellvibrionaceae</taxon>
        <taxon>Saccharophagus</taxon>
    </lineage>
</organism>
<name>ACSA_SACD2</name>
<comment type="function">
    <text evidence="1">Catalyzes the conversion of acetate into acetyl-CoA (AcCoA), an essential intermediate at the junction of anabolic and catabolic pathways. AcsA undergoes a two-step reaction. In the first half reaction, AcsA combines acetate with ATP to form acetyl-adenylate (AcAMP) intermediate. In the second half reaction, it can then transfer the acetyl group from AcAMP to the sulfhydryl group of CoA, forming the product AcCoA.</text>
</comment>
<comment type="catalytic activity">
    <reaction evidence="1">
        <text>acetate + ATP + CoA = acetyl-CoA + AMP + diphosphate</text>
        <dbReference type="Rhea" id="RHEA:23176"/>
        <dbReference type="ChEBI" id="CHEBI:30089"/>
        <dbReference type="ChEBI" id="CHEBI:30616"/>
        <dbReference type="ChEBI" id="CHEBI:33019"/>
        <dbReference type="ChEBI" id="CHEBI:57287"/>
        <dbReference type="ChEBI" id="CHEBI:57288"/>
        <dbReference type="ChEBI" id="CHEBI:456215"/>
        <dbReference type="EC" id="6.2.1.1"/>
    </reaction>
</comment>
<comment type="cofactor">
    <cofactor evidence="1">
        <name>Mg(2+)</name>
        <dbReference type="ChEBI" id="CHEBI:18420"/>
    </cofactor>
</comment>
<comment type="PTM">
    <text evidence="1">Acetylated. Deacetylation by the SIR2-homolog deacetylase activates the enzyme.</text>
</comment>
<comment type="similarity">
    <text evidence="1">Belongs to the ATP-dependent AMP-binding enzyme family.</text>
</comment>
<sequence>MSTPHLYPVPEALAANAHINNEKYHTDYARSINEPDVFWAEKAREFLTWDKPWQSVRSFDFHKGEATWFEGGKLNVTVNCIDRHLPTKANDVAIIWEGDDPSVDASITYQQLHDAVCKFANVLKARGVAKGDRVCIYMPMIPEAAYAMLACARIGAVHSIVFGGFSPEALKDRIVDSDCKVLITADEGLRGGRAVALKANADKAVAHCPQVHSVIVVKRTGADVAWNTERDIWLHEAQQSVDTVCEPESMDSEDPLFILYTSGSTGKPKGVLHTTGGYLLQAAMTHKYVFDYQPGEVYWCTADVGWVTGHTYIVYGPLTNGATTLMFEGVPTYPTAARCWEVCDKHNVNIFYTAPTAIRALMGQGDEFVASTQRKSLRILGTVGEPINPEAWEWYYNVVGDRRCPIMDTWWQTETGGHMLTPLPGAIDLKPGSATLPFFGVEPVLLDGEGNIIEGEGEGSLAIKSSWPGQIRTVYGDHDRLIQTYFSTYPGYYFTGDGARRDADGYYWITGRVDDVLNVSGHRMGTAEVESALVLHPKVAEAAVVGYPHDVKGQGIYAYVTLMTGVEPDDGLRKELVAMCTQEIGPIAKPDLIQWAPGLPKTRSGKIMRRILRKVAANELDTLGDTSTLADPSVVDDLIENRMNR</sequence>
<accession>Q21LV0</accession>
<protein>
    <recommendedName>
        <fullName evidence="1">Acetyl-coenzyme A synthetase</fullName>
        <shortName evidence="1">AcCoA synthetase</shortName>
        <shortName evidence="1">Acs</shortName>
        <ecNumber evidence="1">6.2.1.1</ecNumber>
    </recommendedName>
    <alternativeName>
        <fullName evidence="1">Acetate--CoA ligase</fullName>
    </alternativeName>
    <alternativeName>
        <fullName evidence="1">Acyl-activating enzyme</fullName>
    </alternativeName>
</protein>
<keyword id="KW-0007">Acetylation</keyword>
<keyword id="KW-0067">ATP-binding</keyword>
<keyword id="KW-0436">Ligase</keyword>
<keyword id="KW-0460">Magnesium</keyword>
<keyword id="KW-0479">Metal-binding</keyword>
<keyword id="KW-0547">Nucleotide-binding</keyword>
<keyword id="KW-1185">Reference proteome</keyword>
<evidence type="ECO:0000255" key="1">
    <source>
        <dbReference type="HAMAP-Rule" id="MF_01123"/>
    </source>
</evidence>
<proteinExistence type="inferred from homology"/>